<feature type="chain" id="PRO_0000054839" description="Cyclic-di-GMP-binding biofilm dispersal mediator protein">
    <location>
        <begin position="1"/>
        <end position="237"/>
    </location>
</feature>
<feature type="active site" description="Proton acceptor" evidence="2">
    <location>
        <position position="146"/>
    </location>
</feature>
<feature type="binding site" evidence="1">
    <location>
        <begin position="10"/>
        <end position="34"/>
    </location>
    <ligand>
        <name>NAD(+)</name>
        <dbReference type="ChEBI" id="CHEBI:57540"/>
    </ligand>
</feature>
<feature type="binding site" evidence="1">
    <location>
        <position position="132"/>
    </location>
    <ligand>
        <name>substrate</name>
    </ligand>
</feature>
<feature type="mutagenesis site" description="Shows higher affinity for cyclic-di-GMP, increases swimming motility and biofilm dispersal. Biofilm formation is almost completely removed." evidence="3">
    <original>E</original>
    <variation>Q</variation>
    <variation>V</variation>
    <location>
        <position position="50"/>
    </location>
</feature>
<feature type="turn" evidence="5">
    <location>
        <begin position="3"/>
        <end position="6"/>
    </location>
</feature>
<feature type="strand" evidence="5">
    <location>
        <begin position="8"/>
        <end position="13"/>
    </location>
</feature>
<feature type="helix" evidence="5">
    <location>
        <begin position="17"/>
        <end position="28"/>
    </location>
</feature>
<feature type="strand" evidence="5">
    <location>
        <begin position="32"/>
        <end position="39"/>
    </location>
</feature>
<feature type="helix" evidence="5">
    <location>
        <begin position="41"/>
        <end position="51"/>
    </location>
</feature>
<feature type="strand" evidence="5">
    <location>
        <begin position="54"/>
        <end position="57"/>
    </location>
</feature>
<feature type="helix" evidence="5">
    <location>
        <begin position="63"/>
        <end position="72"/>
    </location>
</feature>
<feature type="strand" evidence="5">
    <location>
        <begin position="77"/>
        <end position="81"/>
    </location>
</feature>
<feature type="helix" evidence="5">
    <location>
        <begin position="91"/>
        <end position="93"/>
    </location>
</feature>
<feature type="helix" evidence="5">
    <location>
        <begin position="96"/>
        <end position="106"/>
    </location>
</feature>
<feature type="helix" evidence="5">
    <location>
        <begin position="108"/>
        <end position="120"/>
    </location>
</feature>
<feature type="strand" evidence="5">
    <location>
        <begin position="126"/>
        <end position="130"/>
    </location>
</feature>
<feature type="helix" evidence="5">
    <location>
        <begin position="133"/>
        <end position="135"/>
    </location>
</feature>
<feature type="helix" evidence="5">
    <location>
        <begin position="144"/>
        <end position="164"/>
    </location>
</feature>
<feature type="helix" evidence="5">
    <location>
        <begin position="165"/>
        <end position="167"/>
    </location>
</feature>
<feature type="strand" evidence="5">
    <location>
        <begin position="170"/>
        <end position="176"/>
    </location>
</feature>
<feature type="helix" evidence="5">
    <location>
        <begin position="191"/>
        <end position="196"/>
    </location>
</feature>
<feature type="strand" evidence="5">
    <location>
        <begin position="198"/>
        <end position="200"/>
    </location>
</feature>
<feature type="helix" evidence="5">
    <location>
        <begin position="206"/>
        <end position="216"/>
    </location>
</feature>
<feature type="helix" evidence="5">
    <location>
        <begin position="219"/>
        <end position="221"/>
    </location>
</feature>
<feature type="strand" evidence="5">
    <location>
        <begin position="228"/>
        <end position="235"/>
    </location>
</feature>
<protein>
    <recommendedName>
        <fullName>Cyclic-di-GMP-binding biofilm dispersal mediator protein</fullName>
    </recommendedName>
</protein>
<comment type="function">
    <text evidence="3">Increases biofilm dispersal. Acts by binding directly to the signaling molecule cyclic-di-GMP, which decreases the intracellular concentration of cyclic-di-GMP and leads to biofilm dispersal. Also controls other biofilm-related phenotypes such as cell motility, cell size, cell aggregation and production of extracellular DNA and extracellular polysaccharides (EPS). Does not act as a phosphodiesterase.</text>
</comment>
<comment type="induction">
    <text evidence="3">Expression is time dependent in biofilms and is controlled by BdcR.</text>
</comment>
<comment type="disruption phenotype">
    <text evidence="3">Mutant shows decreased biofilm dispersal. Deletion increases the cyclic-di GMP concentration in the cell.</text>
</comment>
<comment type="similarity">
    <text evidence="4">Belongs to the short-chain dehydrogenases/reductases (SDR) family.</text>
</comment>
<gene>
    <name type="primary">bdcA</name>
    <name type="synonym">yjgI</name>
    <name type="ordered locus">b4249</name>
    <name type="ordered locus">JW4207</name>
</gene>
<organism>
    <name type="scientific">Escherichia coli (strain K12)</name>
    <dbReference type="NCBI Taxonomy" id="83333"/>
    <lineage>
        <taxon>Bacteria</taxon>
        <taxon>Pseudomonadati</taxon>
        <taxon>Pseudomonadota</taxon>
        <taxon>Gammaproteobacteria</taxon>
        <taxon>Enterobacterales</taxon>
        <taxon>Enterobacteriaceae</taxon>
        <taxon>Escherichia</taxon>
    </lineage>
</organism>
<reference key="1">
    <citation type="journal article" date="1995" name="Nucleic Acids Res.">
        <title>Analysis of the Escherichia coli genome VI: DNA sequence of the region from 92.8 through 100 minutes.</title>
        <authorList>
            <person name="Burland V.D."/>
            <person name="Plunkett G. III"/>
            <person name="Sofia H.J."/>
            <person name="Daniels D.L."/>
            <person name="Blattner F.R."/>
        </authorList>
    </citation>
    <scope>NUCLEOTIDE SEQUENCE [LARGE SCALE GENOMIC DNA]</scope>
    <source>
        <strain>K12 / MG1655 / ATCC 47076</strain>
    </source>
</reference>
<reference key="2">
    <citation type="journal article" date="1997" name="Science">
        <title>The complete genome sequence of Escherichia coli K-12.</title>
        <authorList>
            <person name="Blattner F.R."/>
            <person name="Plunkett G. III"/>
            <person name="Bloch C.A."/>
            <person name="Perna N.T."/>
            <person name="Burland V."/>
            <person name="Riley M."/>
            <person name="Collado-Vides J."/>
            <person name="Glasner J.D."/>
            <person name="Rode C.K."/>
            <person name="Mayhew G.F."/>
            <person name="Gregor J."/>
            <person name="Davis N.W."/>
            <person name="Kirkpatrick H.A."/>
            <person name="Goeden M.A."/>
            <person name="Rose D.J."/>
            <person name="Mau B."/>
            <person name="Shao Y."/>
        </authorList>
    </citation>
    <scope>NUCLEOTIDE SEQUENCE [LARGE SCALE GENOMIC DNA]</scope>
    <scope>SEQUENCE REVISION TO C-TERMINUS</scope>
    <source>
        <strain>K12 / MG1655 / ATCC 47076</strain>
    </source>
</reference>
<reference key="3">
    <citation type="journal article" date="2006" name="Mol. Syst. Biol.">
        <title>Highly accurate genome sequences of Escherichia coli K-12 strains MG1655 and W3110.</title>
        <authorList>
            <person name="Hayashi K."/>
            <person name="Morooka N."/>
            <person name="Yamamoto Y."/>
            <person name="Fujita K."/>
            <person name="Isono K."/>
            <person name="Choi S."/>
            <person name="Ohtsubo E."/>
            <person name="Baba T."/>
            <person name="Wanner B.L."/>
            <person name="Mori H."/>
            <person name="Horiuchi T."/>
        </authorList>
    </citation>
    <scope>NUCLEOTIDE SEQUENCE [LARGE SCALE GENOMIC DNA]</scope>
    <source>
        <strain>K12 / W3110 / ATCC 27325 / DSM 5911</strain>
    </source>
</reference>
<reference key="4">
    <citation type="journal article" date="2011" name="Environ. Microbiol.">
        <title>Engineering a novel c-di-GMP-binding protein for biofilm dispersal.</title>
        <authorList>
            <person name="Ma Q."/>
            <person name="Yang Z."/>
            <person name="Pu M."/>
            <person name="Peti W."/>
            <person name="Wood T.K."/>
        </authorList>
    </citation>
    <scope>FUNCTION</scope>
    <scope>INDUCTION</scope>
    <scope>DISRUPTION PHENOTYPE</scope>
    <scope>GENE NAME</scope>
    <scope>MUTAGENESIS OF GLU-50</scope>
    <source>
        <strain>K12 / BW25113</strain>
    </source>
</reference>
<proteinExistence type="evidence at protein level"/>
<accession>P39333</accession>
<accession>Q2M659</accession>
<evidence type="ECO:0000250" key="1"/>
<evidence type="ECO:0000255" key="2">
    <source>
        <dbReference type="PROSITE-ProRule" id="PRU10001"/>
    </source>
</evidence>
<evidence type="ECO:0000269" key="3">
    <source>
    </source>
</evidence>
<evidence type="ECO:0000305" key="4"/>
<evidence type="ECO:0007829" key="5">
    <source>
        <dbReference type="PDB" id="5Z2L"/>
    </source>
</evidence>
<keyword id="KW-0002">3D-structure</keyword>
<keyword id="KW-0973">c-di-GMP</keyword>
<keyword id="KW-1185">Reference proteome</keyword>
<dbReference type="EMBL" id="U14003">
    <property type="protein sequence ID" value="AAA97146.1"/>
    <property type="status" value="ALT_SEQ"/>
    <property type="molecule type" value="Genomic_DNA"/>
</dbReference>
<dbReference type="EMBL" id="U00096">
    <property type="protein sequence ID" value="AAC77206.1"/>
    <property type="molecule type" value="Genomic_DNA"/>
</dbReference>
<dbReference type="EMBL" id="AP009048">
    <property type="protein sequence ID" value="BAE78247.1"/>
    <property type="molecule type" value="Genomic_DNA"/>
</dbReference>
<dbReference type="PIR" id="D65237">
    <property type="entry name" value="D65237"/>
</dbReference>
<dbReference type="RefSeq" id="NP_418670.1">
    <property type="nucleotide sequence ID" value="NC_000913.3"/>
</dbReference>
<dbReference type="RefSeq" id="WP_000500727.1">
    <property type="nucleotide sequence ID" value="NZ_STEB01000013.1"/>
</dbReference>
<dbReference type="PDB" id="5Z2L">
    <property type="method" value="X-ray"/>
    <property type="resolution" value="1.70 A"/>
    <property type="chains" value="A/B/C/D/E/F/G/H/I/J/K/L=1-237"/>
</dbReference>
<dbReference type="PDBsum" id="5Z2L"/>
<dbReference type="SMR" id="P39333"/>
<dbReference type="BioGRID" id="4259560">
    <property type="interactions" value="13"/>
</dbReference>
<dbReference type="DIP" id="DIP-12604N"/>
<dbReference type="FunCoup" id="P39333">
    <property type="interactions" value="5"/>
</dbReference>
<dbReference type="IntAct" id="P39333">
    <property type="interactions" value="2"/>
</dbReference>
<dbReference type="STRING" id="511145.b4249"/>
<dbReference type="PaxDb" id="511145-b4249"/>
<dbReference type="EnsemblBacteria" id="AAC77206">
    <property type="protein sequence ID" value="AAC77206"/>
    <property type="gene ID" value="b4249"/>
</dbReference>
<dbReference type="GeneID" id="948765"/>
<dbReference type="KEGG" id="ecj:JW4207"/>
<dbReference type="KEGG" id="eco:b4249"/>
<dbReference type="KEGG" id="ecoc:C3026_22930"/>
<dbReference type="PATRIC" id="fig|511145.12.peg.4380"/>
<dbReference type="EchoBASE" id="EB2418"/>
<dbReference type="eggNOG" id="COG1028">
    <property type="taxonomic scope" value="Bacteria"/>
</dbReference>
<dbReference type="HOGENOM" id="CLU_010194_1_3_6"/>
<dbReference type="InParanoid" id="P39333"/>
<dbReference type="OMA" id="NTDMNPA"/>
<dbReference type="OrthoDB" id="5898578at2"/>
<dbReference type="PhylomeDB" id="P39333"/>
<dbReference type="BioCyc" id="EcoCyc:G7880-MONOMER"/>
<dbReference type="PRO" id="PR:P39333"/>
<dbReference type="Proteomes" id="UP000000625">
    <property type="component" value="Chromosome"/>
</dbReference>
<dbReference type="GO" id="GO:0035438">
    <property type="term" value="F:cyclic-di-GMP binding"/>
    <property type="evidence" value="ECO:0000314"/>
    <property type="project" value="EcoCyc"/>
</dbReference>
<dbReference type="GO" id="GO:0070402">
    <property type="term" value="F:NADPH binding"/>
    <property type="evidence" value="ECO:0000314"/>
    <property type="project" value="EcoCyc"/>
</dbReference>
<dbReference type="GO" id="GO:0016491">
    <property type="term" value="F:oxidoreductase activity"/>
    <property type="evidence" value="ECO:0007669"/>
    <property type="project" value="InterPro"/>
</dbReference>
<dbReference type="GO" id="GO:0042803">
    <property type="term" value="F:protein homodimerization activity"/>
    <property type="evidence" value="ECO:0000314"/>
    <property type="project" value="EcoCyc"/>
</dbReference>
<dbReference type="GO" id="GO:0044010">
    <property type="term" value="P:single-species biofilm formation"/>
    <property type="evidence" value="ECO:0000315"/>
    <property type="project" value="EcoCyc"/>
</dbReference>
<dbReference type="CDD" id="cd05233">
    <property type="entry name" value="SDR_c"/>
    <property type="match status" value="1"/>
</dbReference>
<dbReference type="FunFam" id="3.40.50.720:FF:000290">
    <property type="entry name" value="SDR family oxidoreductase"/>
    <property type="match status" value="1"/>
</dbReference>
<dbReference type="Gene3D" id="3.40.50.720">
    <property type="entry name" value="NAD(P)-binding Rossmann-like Domain"/>
    <property type="match status" value="1"/>
</dbReference>
<dbReference type="InterPro" id="IPR036291">
    <property type="entry name" value="NAD(P)-bd_dom_sf"/>
</dbReference>
<dbReference type="InterPro" id="IPR020904">
    <property type="entry name" value="Sc_DH/Rdtase_CS"/>
</dbReference>
<dbReference type="InterPro" id="IPR002347">
    <property type="entry name" value="SDR_fam"/>
</dbReference>
<dbReference type="NCBIfam" id="NF009383">
    <property type="entry name" value="PRK12742.1"/>
    <property type="match status" value="1"/>
</dbReference>
<dbReference type="PANTHER" id="PTHR43943">
    <property type="entry name" value="DEHYDROGENASE/REDUCTASE (SDR FAMILY) MEMBER 4"/>
    <property type="match status" value="1"/>
</dbReference>
<dbReference type="PANTHER" id="PTHR43943:SF2">
    <property type="entry name" value="DEHYDROGENASE_REDUCTASE 4"/>
    <property type="match status" value="1"/>
</dbReference>
<dbReference type="Pfam" id="PF13561">
    <property type="entry name" value="adh_short_C2"/>
    <property type="match status" value="1"/>
</dbReference>
<dbReference type="PRINTS" id="PR00081">
    <property type="entry name" value="GDHRDH"/>
</dbReference>
<dbReference type="PRINTS" id="PR00080">
    <property type="entry name" value="SDRFAMILY"/>
</dbReference>
<dbReference type="SMART" id="SM00822">
    <property type="entry name" value="PKS_KR"/>
    <property type="match status" value="1"/>
</dbReference>
<dbReference type="SUPFAM" id="SSF51735">
    <property type="entry name" value="NAD(P)-binding Rossmann-fold domains"/>
    <property type="match status" value="1"/>
</dbReference>
<dbReference type="PROSITE" id="PS00061">
    <property type="entry name" value="ADH_SHORT"/>
    <property type="match status" value="1"/>
</dbReference>
<sequence length="237" mass="24598">MGAFTGKTVLILGGSRGIGAAIVRRFVTDGANVRFTYAGSKDAAKRLAQETGATAVFTDSADRDAVIDVVRKSGALDILVVNAGIGVFGEALELNADDIDRLFKINIHAPYHASVEAARQMPEGGRILIIGSVNGDRMPVAGMAAYAASKSALQGMARGLARDFGPRGITINVVQPGPIDTDANPANGPMRDMLHSLMAIKRHGQPEEVAGMVAWLAGPEASFVTGAMHTIDGAFGA</sequence>
<name>BDCA_ECOLI</name>